<name>MUTL_LEPBP</name>
<proteinExistence type="inferred from homology"/>
<organism>
    <name type="scientific">Leptospira biflexa serovar Patoc (strain Patoc 1 / ATCC 23582 / Paris)</name>
    <dbReference type="NCBI Taxonomy" id="456481"/>
    <lineage>
        <taxon>Bacteria</taxon>
        <taxon>Pseudomonadati</taxon>
        <taxon>Spirochaetota</taxon>
        <taxon>Spirochaetia</taxon>
        <taxon>Leptospirales</taxon>
        <taxon>Leptospiraceae</taxon>
        <taxon>Leptospira</taxon>
    </lineage>
</organism>
<sequence>MGIIHSLSPDLINQIAAGEVIESTHSILKELIENSIDAGASKIEIATESAGLGRILVSDDGHGITKEDLPLAIKRYATSKIQTFHDLEHLFTFGFRGEALASIASVSRLVIESGTEGNRMAQRVVVEEGKVVSEEEIPFFQGTKIEIKDLFYNTPVRRKFLKTESGEEKKNRTRVQTMALGEPSIGFRYVQNGKEVFHVQKEEPLERVLSIYGENLRDHLLPVHSSRNGMTLRGFISHPDFYKSSRMGQFFFVNNRSVELKFSAQILKRCYGELLPSGAFPYAFLFFDLPREFVDVNVHPQKKEVRFLSEETITGILFQGITEVLRTSTPVEFLEMRRRLSMPIPYHSSADKSQFGGEGMSMGGPGFGFGMAGRGQAVWGSQNEEGNPLLGPSSIEGRAGFSLDGIGAGTNLHLLGDNLTKHNLFVPKKHYGVIFETFILAEAEDGLYIIDQHTAHERIRYEEVLRDLKSKAYKSQSLLTPIRLELTKEEAEEMIAEKHRFSELGITLEPFSGGTILIREVPSYIDPGKETETILDLWERFKSKDPEEKELYDEMAKCVACRSAIKKGDQVSDPIIGELLQRLSYCENPSLCPHGRPTLIKLTRKDLETMFHRI</sequence>
<keyword id="KW-0227">DNA damage</keyword>
<keyword id="KW-0234">DNA repair</keyword>
<keyword id="KW-1185">Reference proteome</keyword>
<reference key="1">
    <citation type="journal article" date="2008" name="PLoS ONE">
        <title>Genome sequence of the saprophyte Leptospira biflexa provides insights into the evolution of Leptospira and the pathogenesis of leptospirosis.</title>
        <authorList>
            <person name="Picardeau M."/>
            <person name="Bulach D.M."/>
            <person name="Bouchier C."/>
            <person name="Zuerner R.L."/>
            <person name="Zidane N."/>
            <person name="Wilson P.J."/>
            <person name="Creno S."/>
            <person name="Kuczek E.S."/>
            <person name="Bommezzadri S."/>
            <person name="Davis J.C."/>
            <person name="McGrath A."/>
            <person name="Johnson M.J."/>
            <person name="Boursaux-Eude C."/>
            <person name="Seemann T."/>
            <person name="Rouy Z."/>
            <person name="Coppel R.L."/>
            <person name="Rood J.I."/>
            <person name="Lajus A."/>
            <person name="Davies J.K."/>
            <person name="Medigue C."/>
            <person name="Adler B."/>
        </authorList>
    </citation>
    <scope>NUCLEOTIDE SEQUENCE [LARGE SCALE GENOMIC DNA]</scope>
    <source>
        <strain>Patoc 1 / ATCC 23582 / Paris</strain>
    </source>
</reference>
<protein>
    <recommendedName>
        <fullName evidence="1">DNA mismatch repair protein MutL</fullName>
    </recommendedName>
</protein>
<comment type="function">
    <text evidence="1">This protein is involved in the repair of mismatches in DNA. It is required for dam-dependent methyl-directed DNA mismatch repair. May act as a 'molecular matchmaker', a protein that promotes the formation of a stable complex between two or more DNA-binding proteins in an ATP-dependent manner without itself being part of a final effector complex.</text>
</comment>
<comment type="similarity">
    <text evidence="1">Belongs to the DNA mismatch repair MutL/HexB family.</text>
</comment>
<dbReference type="EMBL" id="CP000786">
    <property type="protein sequence ID" value="ABZ98253.1"/>
    <property type="molecule type" value="Genomic_DNA"/>
</dbReference>
<dbReference type="RefSeq" id="WP_012389123.1">
    <property type="nucleotide sequence ID" value="NC_010602.1"/>
</dbReference>
<dbReference type="SMR" id="B0ST13"/>
<dbReference type="STRING" id="456481.LEPBI_I2151"/>
<dbReference type="KEGG" id="lbi:LEPBI_I2151"/>
<dbReference type="HOGENOM" id="CLU_004131_4_1_12"/>
<dbReference type="OrthoDB" id="9763467at2"/>
<dbReference type="BioCyc" id="LBIF456481:LEPBI_RS10615-MONOMER"/>
<dbReference type="Proteomes" id="UP000001847">
    <property type="component" value="Chromosome I"/>
</dbReference>
<dbReference type="GO" id="GO:0032300">
    <property type="term" value="C:mismatch repair complex"/>
    <property type="evidence" value="ECO:0007669"/>
    <property type="project" value="InterPro"/>
</dbReference>
<dbReference type="GO" id="GO:0005524">
    <property type="term" value="F:ATP binding"/>
    <property type="evidence" value="ECO:0007669"/>
    <property type="project" value="InterPro"/>
</dbReference>
<dbReference type="GO" id="GO:0016887">
    <property type="term" value="F:ATP hydrolysis activity"/>
    <property type="evidence" value="ECO:0007669"/>
    <property type="project" value="InterPro"/>
</dbReference>
<dbReference type="GO" id="GO:0140664">
    <property type="term" value="F:ATP-dependent DNA damage sensor activity"/>
    <property type="evidence" value="ECO:0007669"/>
    <property type="project" value="InterPro"/>
</dbReference>
<dbReference type="GO" id="GO:0030983">
    <property type="term" value="F:mismatched DNA binding"/>
    <property type="evidence" value="ECO:0007669"/>
    <property type="project" value="InterPro"/>
</dbReference>
<dbReference type="GO" id="GO:0006298">
    <property type="term" value="P:mismatch repair"/>
    <property type="evidence" value="ECO:0007669"/>
    <property type="project" value="UniProtKB-UniRule"/>
</dbReference>
<dbReference type="CDD" id="cd16926">
    <property type="entry name" value="HATPase_MutL-MLH-PMS-like"/>
    <property type="match status" value="1"/>
</dbReference>
<dbReference type="CDD" id="cd00782">
    <property type="entry name" value="MutL_Trans"/>
    <property type="match status" value="1"/>
</dbReference>
<dbReference type="FunFam" id="3.30.565.10:FF:000003">
    <property type="entry name" value="DNA mismatch repair endonuclease MutL"/>
    <property type="match status" value="1"/>
</dbReference>
<dbReference type="Gene3D" id="3.30.230.10">
    <property type="match status" value="1"/>
</dbReference>
<dbReference type="Gene3D" id="3.30.565.10">
    <property type="entry name" value="Histidine kinase-like ATPase, C-terminal domain"/>
    <property type="match status" value="1"/>
</dbReference>
<dbReference type="Gene3D" id="3.30.1540.20">
    <property type="entry name" value="MutL, C-terminal domain, dimerisation subdomain"/>
    <property type="match status" value="1"/>
</dbReference>
<dbReference type="Gene3D" id="3.30.1370.100">
    <property type="entry name" value="MutL, C-terminal domain, regulatory subdomain"/>
    <property type="match status" value="1"/>
</dbReference>
<dbReference type="HAMAP" id="MF_00149">
    <property type="entry name" value="DNA_mis_repair"/>
    <property type="match status" value="1"/>
</dbReference>
<dbReference type="InterPro" id="IPR014762">
    <property type="entry name" value="DNA_mismatch_repair_CS"/>
</dbReference>
<dbReference type="InterPro" id="IPR020667">
    <property type="entry name" value="DNA_mismatch_repair_MutL"/>
</dbReference>
<dbReference type="InterPro" id="IPR013507">
    <property type="entry name" value="DNA_mismatch_S5_2-like"/>
</dbReference>
<dbReference type="InterPro" id="IPR036890">
    <property type="entry name" value="HATPase_C_sf"/>
</dbReference>
<dbReference type="InterPro" id="IPR002099">
    <property type="entry name" value="MutL/Mlh/PMS"/>
</dbReference>
<dbReference type="InterPro" id="IPR038973">
    <property type="entry name" value="MutL/Mlh/Pms-like"/>
</dbReference>
<dbReference type="InterPro" id="IPR014790">
    <property type="entry name" value="MutL_C"/>
</dbReference>
<dbReference type="InterPro" id="IPR042120">
    <property type="entry name" value="MutL_C_dimsub"/>
</dbReference>
<dbReference type="InterPro" id="IPR042121">
    <property type="entry name" value="MutL_C_regsub"/>
</dbReference>
<dbReference type="InterPro" id="IPR037198">
    <property type="entry name" value="MutL_C_sf"/>
</dbReference>
<dbReference type="InterPro" id="IPR020568">
    <property type="entry name" value="Ribosomal_Su5_D2-typ_SF"/>
</dbReference>
<dbReference type="InterPro" id="IPR014721">
    <property type="entry name" value="Ribsml_uS5_D2-typ_fold_subgr"/>
</dbReference>
<dbReference type="NCBIfam" id="TIGR00585">
    <property type="entry name" value="mutl"/>
    <property type="match status" value="1"/>
</dbReference>
<dbReference type="PANTHER" id="PTHR10073">
    <property type="entry name" value="DNA MISMATCH REPAIR PROTEIN MLH, PMS, MUTL"/>
    <property type="match status" value="1"/>
</dbReference>
<dbReference type="PANTHER" id="PTHR10073:SF12">
    <property type="entry name" value="DNA MISMATCH REPAIR PROTEIN MLH1"/>
    <property type="match status" value="1"/>
</dbReference>
<dbReference type="Pfam" id="PF01119">
    <property type="entry name" value="DNA_mis_repair"/>
    <property type="match status" value="1"/>
</dbReference>
<dbReference type="Pfam" id="PF13589">
    <property type="entry name" value="HATPase_c_3"/>
    <property type="match status" value="1"/>
</dbReference>
<dbReference type="Pfam" id="PF08676">
    <property type="entry name" value="MutL_C"/>
    <property type="match status" value="1"/>
</dbReference>
<dbReference type="SMART" id="SM01340">
    <property type="entry name" value="DNA_mis_repair"/>
    <property type="match status" value="1"/>
</dbReference>
<dbReference type="SMART" id="SM00853">
    <property type="entry name" value="MutL_C"/>
    <property type="match status" value="1"/>
</dbReference>
<dbReference type="SUPFAM" id="SSF55874">
    <property type="entry name" value="ATPase domain of HSP90 chaperone/DNA topoisomerase II/histidine kinase"/>
    <property type="match status" value="1"/>
</dbReference>
<dbReference type="SUPFAM" id="SSF118116">
    <property type="entry name" value="DNA mismatch repair protein MutL"/>
    <property type="match status" value="1"/>
</dbReference>
<dbReference type="SUPFAM" id="SSF54211">
    <property type="entry name" value="Ribosomal protein S5 domain 2-like"/>
    <property type="match status" value="1"/>
</dbReference>
<dbReference type="PROSITE" id="PS00058">
    <property type="entry name" value="DNA_MISMATCH_REPAIR_1"/>
    <property type="match status" value="1"/>
</dbReference>
<gene>
    <name evidence="1" type="primary">mutL</name>
    <name type="ordered locus">LEPBI_I2151</name>
</gene>
<accession>B0ST13</accession>
<feature type="chain" id="PRO_1000096663" description="DNA mismatch repair protein MutL">
    <location>
        <begin position="1"/>
        <end position="614"/>
    </location>
</feature>
<evidence type="ECO:0000255" key="1">
    <source>
        <dbReference type="HAMAP-Rule" id="MF_00149"/>
    </source>
</evidence>